<protein>
    <recommendedName>
        <fullName evidence="1">Protein SEY1</fullName>
        <ecNumber evidence="1">3.6.5.-</ecNumber>
    </recommendedName>
</protein>
<organism>
    <name type="scientific">Zygosaccharomyces rouxii (strain ATCC 2623 / CBS 732 / NBRC 1130 / NCYC 568 / NRRL Y-229)</name>
    <dbReference type="NCBI Taxonomy" id="559307"/>
    <lineage>
        <taxon>Eukaryota</taxon>
        <taxon>Fungi</taxon>
        <taxon>Dikarya</taxon>
        <taxon>Ascomycota</taxon>
        <taxon>Saccharomycotina</taxon>
        <taxon>Saccharomycetes</taxon>
        <taxon>Saccharomycetales</taxon>
        <taxon>Saccharomycetaceae</taxon>
        <taxon>Zygosaccharomyces</taxon>
    </lineage>
</organism>
<feature type="chain" id="PRO_0000385008" description="Protein SEY1">
    <location>
        <begin position="1"/>
        <end position="794"/>
    </location>
</feature>
<feature type="topological domain" description="Cytoplasmic" evidence="1">
    <location>
        <begin position="1"/>
        <end position="687"/>
    </location>
</feature>
<feature type="transmembrane region" description="Helical" evidence="1">
    <location>
        <begin position="688"/>
        <end position="708"/>
    </location>
</feature>
<feature type="topological domain" description="Lumenal" evidence="1">
    <location>
        <begin position="709"/>
        <end position="711"/>
    </location>
</feature>
<feature type="transmembrane region" description="Helical" evidence="1">
    <location>
        <begin position="712"/>
        <end position="732"/>
    </location>
</feature>
<feature type="topological domain" description="Cytoplasmic" evidence="1">
    <location>
        <begin position="733"/>
        <end position="794"/>
    </location>
</feature>
<feature type="domain" description="GB1/RHD3-type G" evidence="2">
    <location>
        <begin position="43"/>
        <end position="272"/>
    </location>
</feature>
<feature type="region of interest" description="Disordered" evidence="3">
    <location>
        <begin position="770"/>
        <end position="794"/>
    </location>
</feature>
<feature type="coiled-coil region" evidence="1">
    <location>
        <begin position="331"/>
        <end position="352"/>
    </location>
</feature>
<feature type="compositionally biased region" description="Basic and acidic residues" evidence="3">
    <location>
        <begin position="775"/>
        <end position="794"/>
    </location>
</feature>
<feature type="binding site" evidence="1">
    <location>
        <begin position="53"/>
        <end position="60"/>
    </location>
    <ligand>
        <name>GTP</name>
        <dbReference type="ChEBI" id="CHEBI:37565"/>
    </ligand>
</feature>
<proteinExistence type="inferred from homology"/>
<dbReference type="EC" id="3.6.5.-" evidence="1"/>
<dbReference type="EMBL" id="CU928175">
    <property type="protein sequence ID" value="CAR27018.1"/>
    <property type="molecule type" value="Genomic_DNA"/>
</dbReference>
<dbReference type="RefSeq" id="XP_002495951.1">
    <property type="nucleotide sequence ID" value="XM_002495906.1"/>
</dbReference>
<dbReference type="SMR" id="C5DTA7"/>
<dbReference type="FunCoup" id="C5DTA7">
    <property type="interactions" value="67"/>
</dbReference>
<dbReference type="STRING" id="559307.C5DTA7"/>
<dbReference type="GeneID" id="8203157"/>
<dbReference type="KEGG" id="zro:ZYRO0C06908g"/>
<dbReference type="HOGENOM" id="CLU_011270_0_0_1"/>
<dbReference type="InParanoid" id="C5DTA7"/>
<dbReference type="Proteomes" id="UP000008536">
    <property type="component" value="Chromosome C"/>
</dbReference>
<dbReference type="GO" id="GO:0005789">
    <property type="term" value="C:endoplasmic reticulum membrane"/>
    <property type="evidence" value="ECO:0007669"/>
    <property type="project" value="UniProtKB-SubCell"/>
</dbReference>
<dbReference type="GO" id="GO:0005525">
    <property type="term" value="F:GTP binding"/>
    <property type="evidence" value="ECO:0007669"/>
    <property type="project" value="UniProtKB-UniRule"/>
</dbReference>
<dbReference type="GO" id="GO:0003924">
    <property type="term" value="F:GTPase activity"/>
    <property type="evidence" value="ECO:0007669"/>
    <property type="project" value="UniProtKB-UniRule"/>
</dbReference>
<dbReference type="GO" id="GO:0016320">
    <property type="term" value="P:endoplasmic reticulum membrane fusion"/>
    <property type="evidence" value="ECO:0007669"/>
    <property type="project" value="TreeGrafter"/>
</dbReference>
<dbReference type="CDD" id="cd01851">
    <property type="entry name" value="GBP"/>
    <property type="match status" value="1"/>
</dbReference>
<dbReference type="FunFam" id="3.40.50.300:FF:000727">
    <property type="entry name" value="Protein SEY1 homolog"/>
    <property type="match status" value="1"/>
</dbReference>
<dbReference type="Gene3D" id="3.40.50.300">
    <property type="entry name" value="P-loop containing nucleotide triphosphate hydrolases"/>
    <property type="match status" value="1"/>
</dbReference>
<dbReference type="HAMAP" id="MF_03109">
    <property type="entry name" value="Sey1"/>
    <property type="match status" value="1"/>
</dbReference>
<dbReference type="InterPro" id="IPR030386">
    <property type="entry name" value="G_GB1_RHD3_dom"/>
</dbReference>
<dbReference type="InterPro" id="IPR027417">
    <property type="entry name" value="P-loop_NTPase"/>
</dbReference>
<dbReference type="InterPro" id="IPR008803">
    <property type="entry name" value="RHD3/Sey1"/>
</dbReference>
<dbReference type="InterPro" id="IPR046758">
    <property type="entry name" value="Sey1/RHD3-like_3HB"/>
</dbReference>
<dbReference type="PANTHER" id="PTHR45923">
    <property type="entry name" value="PROTEIN SEY1"/>
    <property type="match status" value="1"/>
</dbReference>
<dbReference type="PANTHER" id="PTHR45923:SF2">
    <property type="entry name" value="PROTEIN SEY1"/>
    <property type="match status" value="1"/>
</dbReference>
<dbReference type="Pfam" id="PF05879">
    <property type="entry name" value="RHD3_GTPase"/>
    <property type="match status" value="1"/>
</dbReference>
<dbReference type="Pfam" id="PF20428">
    <property type="entry name" value="Sey1_3HB"/>
    <property type="match status" value="1"/>
</dbReference>
<dbReference type="SUPFAM" id="SSF52540">
    <property type="entry name" value="P-loop containing nucleoside triphosphate hydrolases"/>
    <property type="match status" value="1"/>
</dbReference>
<dbReference type="PROSITE" id="PS51715">
    <property type="entry name" value="G_GB1_RHD3"/>
    <property type="match status" value="1"/>
</dbReference>
<reference key="1">
    <citation type="journal article" date="2009" name="Genome Res.">
        <title>Comparative genomics of protoploid Saccharomycetaceae.</title>
        <authorList>
            <consortium name="The Genolevures Consortium"/>
            <person name="Souciet J.-L."/>
            <person name="Dujon B."/>
            <person name="Gaillardin C."/>
            <person name="Johnston M."/>
            <person name="Baret P.V."/>
            <person name="Cliften P."/>
            <person name="Sherman D.J."/>
            <person name="Weissenbach J."/>
            <person name="Westhof E."/>
            <person name="Wincker P."/>
            <person name="Jubin C."/>
            <person name="Poulain J."/>
            <person name="Barbe V."/>
            <person name="Segurens B."/>
            <person name="Artiguenave F."/>
            <person name="Anthouard V."/>
            <person name="Vacherie B."/>
            <person name="Val M.-E."/>
            <person name="Fulton R.S."/>
            <person name="Minx P."/>
            <person name="Wilson R."/>
            <person name="Durrens P."/>
            <person name="Jean G."/>
            <person name="Marck C."/>
            <person name="Martin T."/>
            <person name="Nikolski M."/>
            <person name="Rolland T."/>
            <person name="Seret M.-L."/>
            <person name="Casaregola S."/>
            <person name="Despons L."/>
            <person name="Fairhead C."/>
            <person name="Fischer G."/>
            <person name="Lafontaine I."/>
            <person name="Leh V."/>
            <person name="Lemaire M."/>
            <person name="de Montigny J."/>
            <person name="Neuveglise C."/>
            <person name="Thierry A."/>
            <person name="Blanc-Lenfle I."/>
            <person name="Bleykasten C."/>
            <person name="Diffels J."/>
            <person name="Fritsch E."/>
            <person name="Frangeul L."/>
            <person name="Goeffon A."/>
            <person name="Jauniaux N."/>
            <person name="Kachouri-Lafond R."/>
            <person name="Payen C."/>
            <person name="Potier S."/>
            <person name="Pribylova L."/>
            <person name="Ozanne C."/>
            <person name="Richard G.-F."/>
            <person name="Sacerdot C."/>
            <person name="Straub M.-L."/>
            <person name="Talla E."/>
        </authorList>
    </citation>
    <scope>NUCLEOTIDE SEQUENCE [LARGE SCALE GENOMIC DNA]</scope>
    <source>
        <strain>ATCC 2623 / CBS 732 / BCRC 21506 / NBRC 1130 / NCYC 568 / NRRL Y-229</strain>
    </source>
</reference>
<name>SEY1_ZYGRC</name>
<keyword id="KW-0175">Coiled coil</keyword>
<keyword id="KW-0256">Endoplasmic reticulum</keyword>
<keyword id="KW-0342">GTP-binding</keyword>
<keyword id="KW-0378">Hydrolase</keyword>
<keyword id="KW-0472">Membrane</keyword>
<keyword id="KW-0547">Nucleotide-binding</keyword>
<keyword id="KW-1185">Reference proteome</keyword>
<keyword id="KW-0812">Transmembrane</keyword>
<keyword id="KW-1133">Transmembrane helix</keyword>
<comment type="function">
    <text evidence="1">Cooperates with the reticulon proteins and tubule-shaping DP1 family proteins to generate and maintain the structure of the tubular endoplasmic reticulum network. Has GTPase activity, which is required for its function in ER organization.</text>
</comment>
<comment type="subcellular location">
    <subcellularLocation>
        <location evidence="1">Endoplasmic reticulum membrane</location>
        <topology evidence="1">Multi-pass membrane protein</topology>
    </subcellularLocation>
    <text evidence="1">Enriched in the cortical ER. Concentrated in punctae along the ER tubules.</text>
</comment>
<comment type="similarity">
    <text evidence="2">Belongs to the TRAFAC class dynamin-like GTPase superfamily. GB1/RHD3 GTPase family. RHD3 subfamily.</text>
</comment>
<accession>C5DTA7</accession>
<gene>
    <name evidence="1" type="primary">SEY1</name>
    <name type="ordered locus">ZYRO0C06908g</name>
</gene>
<evidence type="ECO:0000255" key="1">
    <source>
        <dbReference type="HAMAP-Rule" id="MF_03109"/>
    </source>
</evidence>
<evidence type="ECO:0000255" key="2">
    <source>
        <dbReference type="PROSITE-ProRule" id="PRU01052"/>
    </source>
</evidence>
<evidence type="ECO:0000256" key="3">
    <source>
        <dbReference type="SAM" id="MobiDB-lite"/>
    </source>
</evidence>
<sequence>MMEVIDSVLGDRQSAIQLIDESKKFHQDALNYFNKCIDDRDVGLDYHVISVFGSQSSGKSTLLNHLFNTDFDTMDAQVKRQQTTKGIWLAHTRKVNTTHKLDGPASDLFVLDVEGSDGAERGEDQDFERKAALFAISVSEVLIVNMWEQQIGLYQGNNMALLKTVFEVNLSLFGKSHNGHKVLLLFVIRDHVGITPLSSLKESLIAELEKVWSELNKPVECEDSSLYDFFDLEFVGLGHKLLQAEQFQEGVKRLGDSFALKSANPYYFKPQYHHNLPLDGWIMYSENCWEQVENNRDLDLPTQQILVARFKTDEVAQEALSLFHSKYSGSVDHILDDREKLGEVLKNLKQECLIYYDERAYRYAEPVYLEKRSELAAKMEAEFRKTIGNFLDQLSESLMQRLQTEVLDKKNQHLPFQKRTKILVQSTKEEYWTAVSSFQQLELLRSTEEILQHFDEQVDTKIKQLKNDEVNTLIARANKSITLKVKEQAVHYLSNPERDTWDKILDMFEKTIQSSLSKYEISEGHYDFQVGFTEEENDSVYKKVCSRAWHVLNVTVHDYLKPDTIVSILRDRFETKFRYDEDDSPRLWRNEDEIDRAFRIAKDHALEVLNVLSFAATSDHVEIVPAFGEDNHEEDECYEDELGIQHSRHFAHILNELQKEKVLQQFRRQINLTVLDSKRSIIKTTTAIPIWMYLLVVALGWNEFVMVLRNPLLVTLVLLFGVGFIFVNKFGLWGPVLNVAHNAVAEVRITAKEKLRAIVMDEDEKRHLINSAGKESYEMKDMSDSDNEKIEKSE</sequence>